<gene>
    <name evidence="1" type="primary">rpsU</name>
    <name type="ordered locus">Pnuc_1701</name>
</gene>
<proteinExistence type="inferred from homology"/>
<protein>
    <recommendedName>
        <fullName evidence="1">Small ribosomal subunit protein bS21</fullName>
    </recommendedName>
    <alternativeName>
        <fullName evidence="2">30S ribosomal protein S21</fullName>
    </alternativeName>
</protein>
<name>RS21_POLAQ</name>
<sequence>MTTVRLRENEPFEVALRRFKRTIEKNGLLTDLRAREFYEKPTAERKRKKAAAAKRHYKRIRSQMLPKKLY</sequence>
<organism>
    <name type="scientific">Polynucleobacter asymbioticus (strain DSM 18221 / CIP 109841 / QLW-P1DMWA-1)</name>
    <name type="common">Polynucleobacter necessarius subsp. asymbioticus</name>
    <dbReference type="NCBI Taxonomy" id="312153"/>
    <lineage>
        <taxon>Bacteria</taxon>
        <taxon>Pseudomonadati</taxon>
        <taxon>Pseudomonadota</taxon>
        <taxon>Betaproteobacteria</taxon>
        <taxon>Burkholderiales</taxon>
        <taxon>Burkholderiaceae</taxon>
        <taxon>Polynucleobacter</taxon>
    </lineage>
</organism>
<comment type="similarity">
    <text evidence="1">Belongs to the bacterial ribosomal protein bS21 family.</text>
</comment>
<reference key="1">
    <citation type="journal article" date="2012" name="Stand. Genomic Sci.">
        <title>Complete genome sequence of Polynucleobacter necessarius subsp. asymbioticus type strain (QLW-P1DMWA-1(T)).</title>
        <authorList>
            <person name="Meincke L."/>
            <person name="Copeland A."/>
            <person name="Lapidus A."/>
            <person name="Lucas S."/>
            <person name="Berry K.W."/>
            <person name="Del Rio T.G."/>
            <person name="Hammon N."/>
            <person name="Dalin E."/>
            <person name="Tice H."/>
            <person name="Pitluck S."/>
            <person name="Richardson P."/>
            <person name="Bruce D."/>
            <person name="Goodwin L."/>
            <person name="Han C."/>
            <person name="Tapia R."/>
            <person name="Detter J.C."/>
            <person name="Schmutz J."/>
            <person name="Brettin T."/>
            <person name="Larimer F."/>
            <person name="Land M."/>
            <person name="Hauser L."/>
            <person name="Kyrpides N.C."/>
            <person name="Ivanova N."/>
            <person name="Goker M."/>
            <person name="Woyke T."/>
            <person name="Wu Q.L."/>
            <person name="Pockl M."/>
            <person name="Hahn M.W."/>
            <person name="Klenk H.P."/>
        </authorList>
    </citation>
    <scope>NUCLEOTIDE SEQUENCE [LARGE SCALE GENOMIC DNA]</scope>
    <source>
        <strain>DSM 18221 / CIP 109841 / QLW-P1DMWA-1</strain>
    </source>
</reference>
<evidence type="ECO:0000255" key="1">
    <source>
        <dbReference type="HAMAP-Rule" id="MF_00358"/>
    </source>
</evidence>
<evidence type="ECO:0000305" key="2"/>
<dbReference type="EMBL" id="CP000655">
    <property type="protein sequence ID" value="ABP34914.1"/>
    <property type="molecule type" value="Genomic_DNA"/>
</dbReference>
<dbReference type="RefSeq" id="WP_011903537.1">
    <property type="nucleotide sequence ID" value="NC_009379.1"/>
</dbReference>
<dbReference type="SMR" id="A4SZK0"/>
<dbReference type="GeneID" id="83596632"/>
<dbReference type="KEGG" id="pnu:Pnuc_1701"/>
<dbReference type="eggNOG" id="COG0828">
    <property type="taxonomic scope" value="Bacteria"/>
</dbReference>
<dbReference type="HOGENOM" id="CLU_159258_1_2_4"/>
<dbReference type="Proteomes" id="UP000000231">
    <property type="component" value="Chromosome"/>
</dbReference>
<dbReference type="GO" id="GO:1990904">
    <property type="term" value="C:ribonucleoprotein complex"/>
    <property type="evidence" value="ECO:0007669"/>
    <property type="project" value="UniProtKB-KW"/>
</dbReference>
<dbReference type="GO" id="GO:0005840">
    <property type="term" value="C:ribosome"/>
    <property type="evidence" value="ECO:0007669"/>
    <property type="project" value="UniProtKB-KW"/>
</dbReference>
<dbReference type="GO" id="GO:0003735">
    <property type="term" value="F:structural constituent of ribosome"/>
    <property type="evidence" value="ECO:0007669"/>
    <property type="project" value="InterPro"/>
</dbReference>
<dbReference type="GO" id="GO:0006412">
    <property type="term" value="P:translation"/>
    <property type="evidence" value="ECO:0007669"/>
    <property type="project" value="UniProtKB-UniRule"/>
</dbReference>
<dbReference type="Gene3D" id="1.20.5.1150">
    <property type="entry name" value="Ribosomal protein S8"/>
    <property type="match status" value="1"/>
</dbReference>
<dbReference type="HAMAP" id="MF_00358">
    <property type="entry name" value="Ribosomal_bS21"/>
    <property type="match status" value="1"/>
</dbReference>
<dbReference type="InterPro" id="IPR001911">
    <property type="entry name" value="Ribosomal_bS21"/>
</dbReference>
<dbReference type="InterPro" id="IPR018278">
    <property type="entry name" value="Ribosomal_bS21_CS"/>
</dbReference>
<dbReference type="InterPro" id="IPR038380">
    <property type="entry name" value="Ribosomal_bS21_sf"/>
</dbReference>
<dbReference type="NCBIfam" id="TIGR00030">
    <property type="entry name" value="S21p"/>
    <property type="match status" value="1"/>
</dbReference>
<dbReference type="PANTHER" id="PTHR21109">
    <property type="entry name" value="MITOCHONDRIAL 28S RIBOSOMAL PROTEIN S21"/>
    <property type="match status" value="1"/>
</dbReference>
<dbReference type="PANTHER" id="PTHR21109:SF22">
    <property type="entry name" value="SMALL RIBOSOMAL SUBUNIT PROTEIN BS21"/>
    <property type="match status" value="1"/>
</dbReference>
<dbReference type="Pfam" id="PF01165">
    <property type="entry name" value="Ribosomal_S21"/>
    <property type="match status" value="1"/>
</dbReference>
<dbReference type="PRINTS" id="PR00976">
    <property type="entry name" value="RIBOSOMALS21"/>
</dbReference>
<dbReference type="PROSITE" id="PS01181">
    <property type="entry name" value="RIBOSOMAL_S21"/>
    <property type="match status" value="1"/>
</dbReference>
<feature type="chain" id="PRO_1000079414" description="Small ribosomal subunit protein bS21">
    <location>
        <begin position="1"/>
        <end position="70"/>
    </location>
</feature>
<accession>A4SZK0</accession>
<keyword id="KW-1185">Reference proteome</keyword>
<keyword id="KW-0687">Ribonucleoprotein</keyword>
<keyword id="KW-0689">Ribosomal protein</keyword>